<comment type="function">
    <text evidence="3">Blocks Kv1.3/KCNA3 voltage-gated potassium channels of human T-lymphocytes (Kd=0.71 nM).</text>
</comment>
<comment type="subcellular location">
    <subcellularLocation>
        <location evidence="3">Secreted</location>
    </subcellularLocation>
</comment>
<comment type="tissue specificity">
    <text evidence="6">Expressed by the venom gland.</text>
</comment>
<comment type="domain">
    <text evidence="2">Has the structural arrangement of an alpha-helix connected to a beta-sheet by disulfide bonds (CSalpha/beta).</text>
</comment>
<comment type="mass spectrometry"/>
<comment type="miscellaneous">
    <text evidence="3">Negative results: does not inhibit calcium-activated potassium channels (KCa3.1/KCNN4) of human T-lymphocytes. Does not inhibit voltage-gated Shaker potassium channels. Does not inhibit rKv2.1/KCNB1 potassium channels.</text>
</comment>
<comment type="similarity">
    <text evidence="5">Belongs to the short scorpion toxin superfamily. Potassium channel inhibitor family. Alpha-KTx 02 subfamily.</text>
</comment>
<name>KAX28_CENEL</name>
<sequence>TVINVKCTSPKQCLKPCKDLYGPHAGAKCMNGKCKCYNN</sequence>
<accession>P0C161</accession>
<reference key="1">
    <citation type="journal article" date="2005" name="Toxicon">
        <title>Novel alpha-KTx peptides from the venom of the scorpion Centruroides elegans selectively blockade Kv1.3 over IKCa1 K+ channels of T cells.</title>
        <authorList>
            <person name="Olamendi-Portugal T."/>
            <person name="Somodi S."/>
            <person name="Fernandez J.A."/>
            <person name="Zamudio F.Z."/>
            <person name="Becerril B."/>
            <person name="Varga Z."/>
            <person name="Panyi G."/>
            <person name="Gaspar R."/>
            <person name="Possani L.D."/>
        </authorList>
    </citation>
    <scope>PROTEIN SEQUENCE</scope>
    <scope>FUNCTION</scope>
    <scope>MASS SPECTROMETRY</scope>
    <scope>ACTIVITY PROFILE</scope>
    <scope>SUBCELLULAR LOCATION</scope>
    <source>
        <tissue>Venom</tissue>
    </source>
</reference>
<dbReference type="SMR" id="P0C161"/>
<dbReference type="GO" id="GO:0005576">
    <property type="term" value="C:extracellular region"/>
    <property type="evidence" value="ECO:0007669"/>
    <property type="project" value="UniProtKB-SubCell"/>
</dbReference>
<dbReference type="GO" id="GO:0008200">
    <property type="term" value="F:ion channel inhibitor activity"/>
    <property type="evidence" value="ECO:0007669"/>
    <property type="project" value="InterPro"/>
</dbReference>
<dbReference type="GO" id="GO:0015459">
    <property type="term" value="F:potassium channel regulator activity"/>
    <property type="evidence" value="ECO:0007669"/>
    <property type="project" value="UniProtKB-KW"/>
</dbReference>
<dbReference type="GO" id="GO:0090729">
    <property type="term" value="F:toxin activity"/>
    <property type="evidence" value="ECO:0007669"/>
    <property type="project" value="UniProtKB-KW"/>
</dbReference>
<dbReference type="FunFam" id="3.30.30.10:FF:000009">
    <property type="entry name" value="Potassium channel toxin alpha-KTx 4.3"/>
    <property type="match status" value="1"/>
</dbReference>
<dbReference type="Gene3D" id="3.30.30.10">
    <property type="entry name" value="Knottin, scorpion toxin-like"/>
    <property type="match status" value="1"/>
</dbReference>
<dbReference type="InterPro" id="IPR036574">
    <property type="entry name" value="Scorpion_toxin-like_sf"/>
</dbReference>
<dbReference type="InterPro" id="IPR001947">
    <property type="entry name" value="Scorpion_toxinS_K_inh"/>
</dbReference>
<dbReference type="Pfam" id="PF00451">
    <property type="entry name" value="Toxin_2"/>
    <property type="match status" value="1"/>
</dbReference>
<dbReference type="PRINTS" id="PR00286">
    <property type="entry name" value="CHARYBDTOXIN"/>
</dbReference>
<dbReference type="SUPFAM" id="SSF57095">
    <property type="entry name" value="Scorpion toxin-like"/>
    <property type="match status" value="1"/>
</dbReference>
<dbReference type="PROSITE" id="PS01138">
    <property type="entry name" value="SCORP_SHORT_TOXIN"/>
    <property type="match status" value="1"/>
</dbReference>
<feature type="chain" id="PRO_0000226958" description="Potassium channel toxin alpha-KTx 2.8" evidence="3">
    <location>
        <begin position="1"/>
        <end position="39"/>
    </location>
</feature>
<feature type="site" description="Basic residue of the functional dyad" evidence="1">
    <location>
        <position position="28"/>
    </location>
</feature>
<feature type="site" description="Aromatic residue of the functional dyad" evidence="1">
    <location>
        <position position="37"/>
    </location>
</feature>
<feature type="disulfide bond" evidence="2">
    <location>
        <begin position="7"/>
        <end position="29"/>
    </location>
</feature>
<feature type="disulfide bond" evidence="2">
    <location>
        <begin position="13"/>
        <end position="34"/>
    </location>
</feature>
<feature type="disulfide bond" evidence="2">
    <location>
        <begin position="17"/>
        <end position="36"/>
    </location>
</feature>
<protein>
    <recommendedName>
        <fullName>Potassium channel toxin alpha-KTx 2.8</fullName>
    </recommendedName>
    <alternativeName>
        <fullName evidence="4">Toxin Ce1</fullName>
    </alternativeName>
</protein>
<organism>
    <name type="scientific">Centruroides elegans</name>
    <name type="common">Bark scorpion</name>
    <dbReference type="NCBI Taxonomy" id="217897"/>
    <lineage>
        <taxon>Eukaryota</taxon>
        <taxon>Metazoa</taxon>
        <taxon>Ecdysozoa</taxon>
        <taxon>Arthropoda</taxon>
        <taxon>Chelicerata</taxon>
        <taxon>Arachnida</taxon>
        <taxon>Scorpiones</taxon>
        <taxon>Buthida</taxon>
        <taxon>Buthoidea</taxon>
        <taxon>Buthidae</taxon>
        <taxon>Centruroides</taxon>
    </lineage>
</organism>
<evidence type="ECO:0000250" key="1"/>
<evidence type="ECO:0000250" key="2">
    <source>
        <dbReference type="UniProtKB" id="P08815"/>
    </source>
</evidence>
<evidence type="ECO:0000269" key="3">
    <source>
    </source>
</evidence>
<evidence type="ECO:0000303" key="4">
    <source>
    </source>
</evidence>
<evidence type="ECO:0000305" key="5"/>
<evidence type="ECO:0000305" key="6">
    <source>
    </source>
</evidence>
<proteinExistence type="evidence at protein level"/>
<keyword id="KW-0903">Direct protein sequencing</keyword>
<keyword id="KW-1015">Disulfide bond</keyword>
<keyword id="KW-0872">Ion channel impairing toxin</keyword>
<keyword id="KW-0528">Neurotoxin</keyword>
<keyword id="KW-0632">Potassium channel impairing toxin</keyword>
<keyword id="KW-0964">Secreted</keyword>
<keyword id="KW-0800">Toxin</keyword>
<keyword id="KW-1220">Voltage-gated potassium channel impairing toxin</keyword>